<organism>
    <name type="scientific">Staphylococcus aureus</name>
    <dbReference type="NCBI Taxonomy" id="1280"/>
    <lineage>
        <taxon>Bacteria</taxon>
        <taxon>Bacillati</taxon>
        <taxon>Bacillota</taxon>
        <taxon>Bacilli</taxon>
        <taxon>Bacillales</taxon>
        <taxon>Staphylococcaceae</taxon>
        <taxon>Staphylococcus</taxon>
    </lineage>
</organism>
<gene>
    <name type="primary">lukD</name>
</gene>
<proteinExistence type="evidence at protein level"/>
<reference key="1">
    <citation type="journal article" date="1998" name="FEBS Lett.">
        <title>Characterization of a novel structural member, LukE-LukD, of the bi-component staphylococcal leucotoxins family.</title>
        <authorList>
            <person name="Gravet A."/>
            <person name="Colin D.A."/>
            <person name="Keller D."/>
            <person name="Giradot R."/>
            <person name="Monteil H."/>
            <person name="Prevost G."/>
        </authorList>
    </citation>
    <scope>NUCLEOTIDE SEQUENCE [GENOMIC DNA]</scope>
    <scope>PROTEIN SEQUENCE OF 27-44</scope>
    <scope>FUNCTION</scope>
    <scope>SUBUNIT</scope>
    <scope>INDUCTION</scope>
    <scope>SUBCELLULAR LOCATION</scope>
    <source>
        <strain>Newman</strain>
    </source>
</reference>
<keyword id="KW-0204">Cytolysis</keyword>
<keyword id="KW-0903">Direct protein sequencing</keyword>
<keyword id="KW-0964">Secreted</keyword>
<keyword id="KW-0732">Signal</keyword>
<keyword id="KW-0800">Toxin</keyword>
<keyword id="KW-0843">Virulence</keyword>
<protein>
    <recommendedName>
        <fullName>Leucotoxin LukD</fullName>
    </recommendedName>
</protein>
<feature type="signal peptide" evidence="2">
    <location>
        <begin position="1"/>
        <end position="26"/>
    </location>
</feature>
<feature type="chain" id="PRO_5000147159" description="Leucotoxin LukD">
    <location>
        <begin position="27"/>
        <end position="327"/>
    </location>
</feature>
<dbReference type="EMBL" id="Y13225">
    <property type="protein sequence ID" value="CAA73668.1"/>
    <property type="molecule type" value="Genomic_DNA"/>
</dbReference>
<dbReference type="SMR" id="O54082"/>
<dbReference type="ABCD" id="O54082">
    <property type="antibodies" value="8 sequenced antibodies"/>
</dbReference>
<dbReference type="PHI-base" id="PHI:10307"/>
<dbReference type="PHI-base" id="PHI:123361"/>
<dbReference type="GO" id="GO:0005576">
    <property type="term" value="C:extracellular region"/>
    <property type="evidence" value="ECO:0007669"/>
    <property type="project" value="UniProtKB-SubCell"/>
</dbReference>
<dbReference type="GO" id="GO:0090729">
    <property type="term" value="F:toxin activity"/>
    <property type="evidence" value="ECO:0007669"/>
    <property type="project" value="UniProtKB-KW"/>
</dbReference>
<dbReference type="GO" id="GO:0051715">
    <property type="term" value="P:cytolysis in another organism"/>
    <property type="evidence" value="ECO:0007669"/>
    <property type="project" value="InterPro"/>
</dbReference>
<dbReference type="Gene3D" id="2.70.240.10">
    <property type="entry name" value="Leukocidin/porin MspA"/>
    <property type="match status" value="1"/>
</dbReference>
<dbReference type="InterPro" id="IPR003963">
    <property type="entry name" value="Bi-component_toxin_staph"/>
</dbReference>
<dbReference type="InterPro" id="IPR016183">
    <property type="entry name" value="Leukocidin/Hemolysin_toxin"/>
</dbReference>
<dbReference type="InterPro" id="IPR036435">
    <property type="entry name" value="Leukocidin/porin_MspA_sf"/>
</dbReference>
<dbReference type="NCBIfam" id="TIGR01002">
    <property type="entry name" value="hlyII"/>
    <property type="match status" value="1"/>
</dbReference>
<dbReference type="Pfam" id="PF07968">
    <property type="entry name" value="Leukocidin"/>
    <property type="match status" value="1"/>
</dbReference>
<dbReference type="PRINTS" id="PR01468">
    <property type="entry name" value="BICOMPNTOXIN"/>
</dbReference>
<dbReference type="SUPFAM" id="SSF56959">
    <property type="entry name" value="Leukocidin-like"/>
    <property type="match status" value="1"/>
</dbReference>
<evidence type="ECO:0000250" key="1"/>
<evidence type="ECO:0000269" key="2">
    <source>
    </source>
</evidence>
<evidence type="ECO:0000305" key="3"/>
<accession>O54082</accession>
<sequence length="327" mass="36876">MKIEKLGKSSVASSIALLLLSNTVDAAQNITPKREKKVDDKITLYKTTATSDNDKLNIFQILTFNFIKDKSYDKDTLVLKAAGNINSGYKNSNPKDYNYSQFYWGGKYNVSVSSESNDAVNVVDYAPKNQNEEFQVQQTLGYSYGGDINISNGLSGGLNGSKSFSETINYKQESYRTTIDRKTNHKSIGWGVEAHKIMNNGWGPYGRDSYDPTYGNELFLGGDKSSSNAGQNFLPTHQIPLLARGNFNPEFISVLSHKLFDTKKSKIKVTYQREMDRYTNQWNRSHWVGNNYKNQNTVTFTSTYEVDWQNILLKLIGTDSKETNPGV</sequence>
<name>LUKD_STAAU</name>
<comment type="function">
    <text evidence="2">Part of a bi-component leucotoxin that acts by forming pores in the membrane of the target cells. LukE-LukD is as effective as the Panton-Valentine leucocidin (PVL) for inducing dermonecrosis when injected in the rabbit skin, but not hemolytic and poorly leucotoxic on human blood cells compared to other leucotoxins expressed by S.aureus. HlgA-LukD is a Ca(2+) channel inducer.</text>
</comment>
<comment type="subunit">
    <text evidence="1 2">Toxicity requires sequential binding and synergistic association of a class S and a class F component which form heterooligomeric complexes (By similarity). LukE (class S) associates with LukD (class F). LukD can also associate with HlgA.</text>
</comment>
<comment type="subcellular location">
    <subcellularLocation>
        <location evidence="2">Secreted</location>
    </subcellularLocation>
</comment>
<comment type="induction">
    <text evidence="2">Expressed at the late exponential growth. Is cotranscribed with lukE.</text>
</comment>
<comment type="similarity">
    <text evidence="3">Belongs to the aerolysin family.</text>
</comment>